<comment type="function">
    <text evidence="1">Movement protein involved in the cell-to-cell and systemic transport of viral genomic DNA. Begomoviruses use 2 proteins to transport their DNA from cell to cell. The nuclear shuttle protein (NSP) shuttles it between nucleus and cytoplasm and the movement protein (MP) probably transports the DNA-NSP complex to the cell periphery and facilitates further movement across the cell wall (By similarity).</text>
</comment>
<comment type="subunit">
    <text evidence="1">Binds to dimeric supercoiled plasmid DNA.</text>
</comment>
<comment type="subcellular location">
    <subcellularLocation>
        <location evidence="1">Host cell membrane</location>
        <topology evidence="1">Peripheral membrane protein</topology>
        <orientation evidence="1">Cytoplasmic side</orientation>
    </subcellularLocation>
    <subcellularLocation>
        <location evidence="1">Host microsome membrane</location>
        <topology evidence="1">Peripheral membrane protein</topology>
        <orientation evidence="1">Cytoplasmic side</orientation>
    </subcellularLocation>
    <subcellularLocation>
        <location evidence="1">Host endoplasmic reticulum membrane</location>
        <topology evidence="1">Peripheral membrane protein</topology>
        <orientation evidence="1">Cytoplasmic side</orientation>
    </subcellularLocation>
    <text evidence="1">Found on ER-derived vesicles.</text>
</comment>
<comment type="PTM">
    <text evidence="1">Phosphorylated.</text>
</comment>
<comment type="similarity">
    <text evidence="3">Belongs to the begomovirus movement protein BC1 family.</text>
</comment>
<comment type="sequence caution" evidence="3">
    <conflict type="frameshift">
        <sequence resource="EMBL" id="K02030"/>
    </conflict>
</comment>
<name>BC1_TGMVY</name>
<organism>
    <name type="scientific">Tomato golden mosaic virus (strain Yellow vein)</name>
    <name type="common">TGMV</name>
    <dbReference type="NCBI Taxonomy" id="223341"/>
    <lineage>
        <taxon>Viruses</taxon>
        <taxon>Monodnaviria</taxon>
        <taxon>Shotokuvirae</taxon>
        <taxon>Cressdnaviricota</taxon>
        <taxon>Repensiviricetes</taxon>
        <taxon>Geplafuvirales</taxon>
        <taxon>Geminiviridae</taxon>
        <taxon>Begomovirus</taxon>
        <taxon>Tomato golden mosaic virus</taxon>
    </lineage>
</organism>
<organismHost>
    <name type="scientific">Solanum lycopersicum</name>
    <name type="common">Tomato</name>
    <name type="synonym">Lycopersicon esculentum</name>
    <dbReference type="NCBI Taxonomy" id="4081"/>
</organismHost>
<evidence type="ECO:0000250" key="1"/>
<evidence type="ECO:0000256" key="2">
    <source>
        <dbReference type="SAM" id="MobiDB-lite"/>
    </source>
</evidence>
<evidence type="ECO:0000305" key="3"/>
<proteinExistence type="inferred from homology"/>
<protein>
    <recommendedName>
        <fullName>Movement protein BC1</fullName>
    </recommendedName>
    <alternativeName>
        <fullName>Movement protein BL1</fullName>
    </alternativeName>
</protein>
<sequence length="293" mass="32933">MDSQLACPPNVFNYIESNRDEYQLSHDLTEIILQFPSTASQLSARLSRSCMKIDHCVIEFRQQVPINATGSVVVEIHDKRMTDNESLQASWTFPVRCNIDLHYFSSSFFSLKDPIPWKLYYKVCDSNVHQRTHFAKFKGKLKLSTAKHSVDIPFRAPTVKILSKQFTDKDVDFSHVGYGKWDRKMIRSASTSTIGLTGPIELRPGESWASRSTIGPSPSYAGSDQGDAMHPYKHLNRLGTTILDPGESASIIGAERTQSNITMSMVQLNEIVRATVQECINTNCTPSQPKTLQ</sequence>
<keyword id="KW-0238">DNA-binding</keyword>
<keyword id="KW-1032">Host cell membrane</keyword>
<keyword id="KW-1038">Host endoplasmic reticulum</keyword>
<keyword id="KW-1043">Host membrane</keyword>
<keyword id="KW-1044">Host microsome</keyword>
<keyword id="KW-0472">Membrane</keyword>
<keyword id="KW-0597">Phosphoprotein</keyword>
<keyword id="KW-1185">Reference proteome</keyword>
<keyword id="KW-0813">Transport</keyword>
<keyword id="KW-0916">Viral movement protein</keyword>
<feature type="chain" id="PRO_0000222258" description="Movement protein BC1">
    <location>
        <begin position="1"/>
        <end position="293"/>
    </location>
</feature>
<feature type="region of interest" description="Disordered" evidence="2">
    <location>
        <begin position="207"/>
        <end position="228"/>
    </location>
</feature>
<feature type="compositionally biased region" description="Polar residues" evidence="2">
    <location>
        <begin position="209"/>
        <end position="222"/>
    </location>
</feature>
<feature type="sequence conflict" description="In Ref. 2." evidence="3" ref="2">
    <original>V</original>
    <variation>A</variation>
    <location>
        <position position="11"/>
    </location>
</feature>
<dbReference type="EMBL" id="M73794">
    <property type="protein sequence ID" value="AAA46584.1"/>
    <property type="molecule type" value="Genomic_DNA"/>
</dbReference>
<dbReference type="EMBL" id="K02030">
    <property type="status" value="NOT_ANNOTATED_CDS"/>
    <property type="molecule type" value="Genomic_DNA"/>
</dbReference>
<dbReference type="PIR" id="A04169">
    <property type="entry name" value="QQCVLG"/>
</dbReference>
<dbReference type="Proteomes" id="UP000007405">
    <property type="component" value="Genome"/>
</dbReference>
<dbReference type="GO" id="GO:0044167">
    <property type="term" value="C:host cell endoplasmic reticulum membrane"/>
    <property type="evidence" value="ECO:0007669"/>
    <property type="project" value="UniProtKB-SubCell"/>
</dbReference>
<dbReference type="GO" id="GO:0020002">
    <property type="term" value="C:host cell plasma membrane"/>
    <property type="evidence" value="ECO:0007669"/>
    <property type="project" value="UniProtKB-SubCell"/>
</dbReference>
<dbReference type="GO" id="GO:0016020">
    <property type="term" value="C:membrane"/>
    <property type="evidence" value="ECO:0007669"/>
    <property type="project" value="UniProtKB-KW"/>
</dbReference>
<dbReference type="GO" id="GO:0003677">
    <property type="term" value="F:DNA binding"/>
    <property type="evidence" value="ECO:0007669"/>
    <property type="project" value="UniProtKB-KW"/>
</dbReference>
<dbReference type="GO" id="GO:0046740">
    <property type="term" value="P:transport of virus in host, cell to cell"/>
    <property type="evidence" value="ECO:0007669"/>
    <property type="project" value="UniProtKB-KW"/>
</dbReference>
<dbReference type="InterPro" id="IPR000211">
    <property type="entry name" value="Gemini_BL"/>
</dbReference>
<dbReference type="Pfam" id="PF00845">
    <property type="entry name" value="Gemini_BL1"/>
    <property type="match status" value="1"/>
</dbReference>
<accession>P03566</accession>
<reference key="1">
    <citation type="submission" date="1991-07" db="EMBL/GenBank/DDBJ databases">
        <title>Symptom determinants of tomato golden mosaic virus are encoded on DNA B.</title>
        <authorList>
            <person name="von Arnim A.G."/>
            <person name="Stanley J."/>
        </authorList>
    </citation>
    <scope>NUCLEOTIDE SEQUENCE [GENOMIC DNA]</scope>
</reference>
<reference key="2">
    <citation type="journal article" date="1984" name="EMBO J.">
        <title>Complete nucleotide sequence of the infectious cloned DNA components of tomato golden mosaic virus: potential coding regions and regulatory sequences.</title>
        <authorList>
            <person name="Hamilton W.D.O."/>
            <person name="Stein V.E."/>
            <person name="Coutts R.H.A."/>
            <person name="Buck K.W."/>
        </authorList>
    </citation>
    <scope>NUCLEOTIDE SEQUENCE [GENOMIC DNA]</scope>
</reference>
<gene>
    <name type="ORF">BC1</name>
    <name type="ORF">BL1</name>
</gene>